<keyword id="KW-0010">Activator</keyword>
<keyword id="KW-0131">Cell cycle</keyword>
<keyword id="KW-0132">Cell division</keyword>
<keyword id="KW-0498">Mitosis</keyword>
<keyword id="KW-0539">Nucleus</keyword>
<keyword id="KW-1185">Reference proteome</keyword>
<keyword id="KW-0346">Stress response</keyword>
<keyword id="KW-0804">Transcription</keyword>
<keyword id="KW-0805">Transcription regulation</keyword>
<organism>
    <name type="scientific">Candida glabrata (strain ATCC 2001 / BCRC 20586 / JCM 3761 / NBRC 0622 / NRRL Y-65 / CBS 138)</name>
    <name type="common">Yeast</name>
    <name type="synonym">Nakaseomyces glabratus</name>
    <dbReference type="NCBI Taxonomy" id="284593"/>
    <lineage>
        <taxon>Eukaryota</taxon>
        <taxon>Fungi</taxon>
        <taxon>Dikarya</taxon>
        <taxon>Ascomycota</taxon>
        <taxon>Saccharomycotina</taxon>
        <taxon>Saccharomycetes</taxon>
        <taxon>Saccharomycetales</taxon>
        <taxon>Saccharomycetaceae</taxon>
        <taxon>Nakaseomyces</taxon>
    </lineage>
</organism>
<name>POG1_CANGA</name>
<reference key="1">
    <citation type="journal article" date="2004" name="Nature">
        <title>Genome evolution in yeasts.</title>
        <authorList>
            <person name="Dujon B."/>
            <person name="Sherman D."/>
            <person name="Fischer G."/>
            <person name="Durrens P."/>
            <person name="Casaregola S."/>
            <person name="Lafontaine I."/>
            <person name="de Montigny J."/>
            <person name="Marck C."/>
            <person name="Neuveglise C."/>
            <person name="Talla E."/>
            <person name="Goffard N."/>
            <person name="Frangeul L."/>
            <person name="Aigle M."/>
            <person name="Anthouard V."/>
            <person name="Babour A."/>
            <person name="Barbe V."/>
            <person name="Barnay S."/>
            <person name="Blanchin S."/>
            <person name="Beckerich J.-M."/>
            <person name="Beyne E."/>
            <person name="Bleykasten C."/>
            <person name="Boisrame A."/>
            <person name="Boyer J."/>
            <person name="Cattolico L."/>
            <person name="Confanioleri F."/>
            <person name="de Daruvar A."/>
            <person name="Despons L."/>
            <person name="Fabre E."/>
            <person name="Fairhead C."/>
            <person name="Ferry-Dumazet H."/>
            <person name="Groppi A."/>
            <person name="Hantraye F."/>
            <person name="Hennequin C."/>
            <person name="Jauniaux N."/>
            <person name="Joyet P."/>
            <person name="Kachouri R."/>
            <person name="Kerrest A."/>
            <person name="Koszul R."/>
            <person name="Lemaire M."/>
            <person name="Lesur I."/>
            <person name="Ma L."/>
            <person name="Muller H."/>
            <person name="Nicaud J.-M."/>
            <person name="Nikolski M."/>
            <person name="Oztas S."/>
            <person name="Ozier-Kalogeropoulos O."/>
            <person name="Pellenz S."/>
            <person name="Potier S."/>
            <person name="Richard G.-F."/>
            <person name="Straub M.-L."/>
            <person name="Suleau A."/>
            <person name="Swennen D."/>
            <person name="Tekaia F."/>
            <person name="Wesolowski-Louvel M."/>
            <person name="Westhof E."/>
            <person name="Wirth B."/>
            <person name="Zeniou-Meyer M."/>
            <person name="Zivanovic Y."/>
            <person name="Bolotin-Fukuhara M."/>
            <person name="Thierry A."/>
            <person name="Bouchier C."/>
            <person name="Caudron B."/>
            <person name="Scarpelli C."/>
            <person name="Gaillardin C."/>
            <person name="Weissenbach J."/>
            <person name="Wincker P."/>
            <person name="Souciet J.-L."/>
        </authorList>
    </citation>
    <scope>NUCLEOTIDE SEQUENCE [LARGE SCALE GENOMIC DNA]</scope>
    <source>
        <strain>ATCC 2001 / BCRC 20586 / JCM 3761 / NBRC 0622 / NRRL Y-65 / CBS 138</strain>
    </source>
</reference>
<feature type="chain" id="PRO_0000333398" description="Transcriptional activator POG1">
    <location>
        <begin position="1"/>
        <end position="525"/>
    </location>
</feature>
<feature type="region of interest" description="Disordered" evidence="2">
    <location>
        <begin position="1"/>
        <end position="108"/>
    </location>
</feature>
<feature type="region of interest" description="Disordered" evidence="2">
    <location>
        <begin position="285"/>
        <end position="376"/>
    </location>
</feature>
<feature type="region of interest" description="Disordered" evidence="2">
    <location>
        <begin position="467"/>
        <end position="506"/>
    </location>
</feature>
<feature type="compositionally biased region" description="Basic and acidic residues" evidence="2">
    <location>
        <begin position="1"/>
        <end position="22"/>
    </location>
</feature>
<feature type="compositionally biased region" description="Basic and acidic residues" evidence="2">
    <location>
        <begin position="30"/>
        <end position="42"/>
    </location>
</feature>
<feature type="compositionally biased region" description="Low complexity" evidence="2">
    <location>
        <begin position="62"/>
        <end position="71"/>
    </location>
</feature>
<feature type="compositionally biased region" description="Polar residues" evidence="2">
    <location>
        <begin position="78"/>
        <end position="108"/>
    </location>
</feature>
<feature type="compositionally biased region" description="Polar residues" evidence="2">
    <location>
        <begin position="285"/>
        <end position="305"/>
    </location>
</feature>
<feature type="compositionally biased region" description="Basic and acidic residues" evidence="2">
    <location>
        <begin position="306"/>
        <end position="320"/>
    </location>
</feature>
<feature type="compositionally biased region" description="Low complexity" evidence="2">
    <location>
        <begin position="326"/>
        <end position="346"/>
    </location>
</feature>
<feature type="compositionally biased region" description="Basic and acidic residues" evidence="2">
    <location>
        <begin position="354"/>
        <end position="365"/>
    </location>
</feature>
<feature type="compositionally biased region" description="Polar residues" evidence="2">
    <location>
        <begin position="470"/>
        <end position="483"/>
    </location>
</feature>
<feature type="compositionally biased region" description="Polar residues" evidence="2">
    <location>
        <begin position="491"/>
        <end position="506"/>
    </location>
</feature>
<evidence type="ECO:0000250" key="1"/>
<evidence type="ECO:0000256" key="2">
    <source>
        <dbReference type="SAM" id="MobiDB-lite"/>
    </source>
</evidence>
<evidence type="ECO:0000305" key="3"/>
<proteinExistence type="inferred from homology"/>
<dbReference type="EMBL" id="CR380953">
    <property type="protein sequence ID" value="CAG59665.1"/>
    <property type="molecule type" value="Genomic_DNA"/>
</dbReference>
<dbReference type="RefSeq" id="XP_446738.1">
    <property type="nucleotide sequence ID" value="XM_446738.1"/>
</dbReference>
<dbReference type="SMR" id="Q6FSQ6"/>
<dbReference type="FunCoup" id="Q6FSQ6">
    <property type="interactions" value="76"/>
</dbReference>
<dbReference type="STRING" id="284593.Q6FSQ6"/>
<dbReference type="EnsemblFungi" id="CAGL0G08646g-T">
    <property type="protein sequence ID" value="CAGL0G08646g-T-p1"/>
    <property type="gene ID" value="CAGL0G08646g"/>
</dbReference>
<dbReference type="KEGG" id="cgr:2888132"/>
<dbReference type="CGD" id="CAL0137775">
    <property type="gene designation" value="CAGL0G08646g"/>
</dbReference>
<dbReference type="VEuPathDB" id="FungiDB:CAGL0G08646g"/>
<dbReference type="eggNOG" id="ENOG502S5H5">
    <property type="taxonomic scope" value="Eukaryota"/>
</dbReference>
<dbReference type="HOGENOM" id="CLU_518733_0_0_1"/>
<dbReference type="InParanoid" id="Q6FSQ6"/>
<dbReference type="Proteomes" id="UP000002428">
    <property type="component" value="Chromosome G"/>
</dbReference>
<dbReference type="GO" id="GO:0005634">
    <property type="term" value="C:nucleus"/>
    <property type="evidence" value="ECO:0007669"/>
    <property type="project" value="UniProtKB-SubCell"/>
</dbReference>
<dbReference type="GO" id="GO:0051301">
    <property type="term" value="P:cell division"/>
    <property type="evidence" value="ECO:0007669"/>
    <property type="project" value="UniProtKB-KW"/>
</dbReference>
<gene>
    <name type="primary">POG1</name>
    <name type="ordered locus">CAGL0G08646g</name>
</gene>
<protein>
    <recommendedName>
        <fullName>Transcriptional activator POG1</fullName>
    </recommendedName>
</protein>
<accession>Q6FSQ6</accession>
<comment type="function">
    <text evidence="1">Transcriptional activator which promotes cell cycle recovery, after pheromone induced G1 arrest. May also be involved in stress-resistance (By similarity).</text>
</comment>
<comment type="subcellular location">
    <subcellularLocation>
        <location evidence="1">Nucleus</location>
    </subcellularLocation>
</comment>
<comment type="similarity">
    <text evidence="3">Belongs to the POG1 family.</text>
</comment>
<sequence length="525" mass="58002">MEKDHLVEEEKKDKVESEKPEEGVTVPKVESNDDIHQTDTPKVDSTTSEGKLKDPVAVERPSINSTNTSSSGGFGNTVNDLSQPSTRPVTTAETSTNSNLPWDGNQANRNLNSQSYDLRVHLLKSLGIEDISRIDIADNKLLERFFSLHIEREQKEIEKLKTKNLEKLELIVDKFVSNEKFTNDTLNKLLELISSKSIDSHDLLGSSSIQLKRTEHSPNRLMSPRGHKRYKSEIPTVPETQYSHINYNIHGQPVNMVYHQAYQQVTPQTYYVPQGNQAWHQGSYTQGNRATFQPPSLANSNINNSEDVKLQEGVKVEPSGRARQRSSTSLGASLSTSNSTSNLSNTMKAATANEGKDTGSNDGHHTGSYGASNASNVMPSQVNNPNYMTYGSVRGGPYVMVQQPPGQQMATQYIPAGNQGFYQSVVPNQGHMNGMVASSQGYQANTPQPATSDNMVMLGNQYRGNETLHQDATPSLSSSTSQKRQGHRRTQSANVVLSTGRSPNRMNMQRQVNFLIHTPKHPPPT</sequence>